<name>RT13_OENBE</name>
<accession>P15758</accession>
<sequence length="114" mass="13238">MSYISGARLVADEQVRIASTKMDGIGPKKAIQVRSRLGGNIKRKELTKYQIDQIEQMRGQDHVVHWELKRGERADIERFISISCYRGIRHQDGLPLRGQRSHTNARTSRKRIRK</sequence>
<comment type="function">
    <text evidence="1">Located at the top of the head of the small subunit, it contacts several helices of the 18S rRNA.</text>
</comment>
<comment type="subunit">
    <text>Part of the small ribosomal subunit.</text>
</comment>
<comment type="subcellular location">
    <subcellularLocation>
        <location>Mitochondrion</location>
    </subcellularLocation>
</comment>
<comment type="similarity">
    <text evidence="3">Belongs to the universal ribosomal protein uS13 family.</text>
</comment>
<protein>
    <recommendedName>
        <fullName evidence="3">Small ribosomal subunit protein uS13m</fullName>
    </recommendedName>
    <alternativeName>
        <fullName>Ribosomal protein S13, mitochondrial</fullName>
    </alternativeName>
</protein>
<reference key="1">
    <citation type="journal article" date="1990" name="Mol. Gen. Genet.">
        <title>Species-specific RNA editing patterns in the mitochondrial rps13 transcripts of Oenothera and Daucus.</title>
        <authorList>
            <person name="Schuster W."/>
            <person name="Wissinger B."/>
            <person name="Unseld M."/>
            <person name="Brennicke A."/>
        </authorList>
    </citation>
    <scope>NUCLEOTIDE SEQUENCE [MRNA]</scope>
</reference>
<reference key="2">
    <citation type="journal article" date="1987" name="Mol. Gen. Genet.">
        <title>Plastid DNA in the mitochondrial genome of Oenothera: intra- and interorganellar rearrangements involving part of the plastid ribosomal cistron.</title>
        <authorList>
            <person name="Schuster W."/>
            <person name="Brennicke A."/>
        </authorList>
    </citation>
    <scope>NUCLEOTIDE SEQUENCE</scope>
    <source>
        <strain>cv. Munzia</strain>
    </source>
</reference>
<feature type="chain" id="PRO_0000132205" description="Small ribosomal subunit protein uS13m">
    <location>
        <begin position="1"/>
        <end position="114"/>
    </location>
</feature>
<feature type="region of interest" description="Disordered" evidence="2">
    <location>
        <begin position="92"/>
        <end position="114"/>
    </location>
</feature>
<feature type="sequence conflict" description="In Ref. 1; CAA38280." evidence="3" ref="1">
    <original>L</original>
    <variation>S</variation>
    <location>
        <position position="9"/>
    </location>
</feature>
<proteinExistence type="inferred from homology"/>
<geneLocation type="mitochondrion"/>
<organism>
    <name type="scientific">Oenothera berteroana</name>
    <name type="common">Bertero's evening primrose</name>
    <dbReference type="NCBI Taxonomy" id="3950"/>
    <lineage>
        <taxon>Eukaryota</taxon>
        <taxon>Viridiplantae</taxon>
        <taxon>Streptophyta</taxon>
        <taxon>Embryophyta</taxon>
        <taxon>Tracheophyta</taxon>
        <taxon>Spermatophyta</taxon>
        <taxon>Magnoliopsida</taxon>
        <taxon>eudicotyledons</taxon>
        <taxon>Gunneridae</taxon>
        <taxon>Pentapetalae</taxon>
        <taxon>rosids</taxon>
        <taxon>malvids</taxon>
        <taxon>Myrtales</taxon>
        <taxon>Onagraceae</taxon>
        <taxon>Onagroideae</taxon>
        <taxon>Onagreae</taxon>
        <taxon>Oenothera</taxon>
    </lineage>
</organism>
<gene>
    <name type="primary">RPS13</name>
</gene>
<keyword id="KW-0496">Mitochondrion</keyword>
<keyword id="KW-0687">Ribonucleoprotein</keyword>
<keyword id="KW-0689">Ribosomal protein</keyword>
<keyword id="KW-0694">RNA-binding</keyword>
<keyword id="KW-0699">rRNA-binding</keyword>
<dbReference type="EMBL" id="X54416">
    <property type="protein sequence ID" value="CAA38280.1"/>
    <property type="molecule type" value="mRNA"/>
</dbReference>
<dbReference type="EMBL" id="X06235">
    <property type="status" value="NOT_ANNOTATED_CDS"/>
    <property type="molecule type" value="Genomic_DNA"/>
</dbReference>
<dbReference type="SMR" id="P15758"/>
<dbReference type="GO" id="GO:0005739">
    <property type="term" value="C:mitochondrion"/>
    <property type="evidence" value="ECO:0007669"/>
    <property type="project" value="UniProtKB-SubCell"/>
</dbReference>
<dbReference type="GO" id="GO:0015935">
    <property type="term" value="C:small ribosomal subunit"/>
    <property type="evidence" value="ECO:0007669"/>
    <property type="project" value="TreeGrafter"/>
</dbReference>
<dbReference type="GO" id="GO:0019843">
    <property type="term" value="F:rRNA binding"/>
    <property type="evidence" value="ECO:0007669"/>
    <property type="project" value="UniProtKB-KW"/>
</dbReference>
<dbReference type="GO" id="GO:0003735">
    <property type="term" value="F:structural constituent of ribosome"/>
    <property type="evidence" value="ECO:0007669"/>
    <property type="project" value="InterPro"/>
</dbReference>
<dbReference type="GO" id="GO:0006412">
    <property type="term" value="P:translation"/>
    <property type="evidence" value="ECO:0007669"/>
    <property type="project" value="InterPro"/>
</dbReference>
<dbReference type="FunFam" id="1.10.8.50:FF:000011">
    <property type="entry name" value="Ribosomal protein S13"/>
    <property type="match status" value="1"/>
</dbReference>
<dbReference type="FunFam" id="4.10.910.10:FF:000003">
    <property type="entry name" value="Ribosomal protein S13"/>
    <property type="match status" value="1"/>
</dbReference>
<dbReference type="Gene3D" id="1.10.8.50">
    <property type="match status" value="1"/>
</dbReference>
<dbReference type="Gene3D" id="4.10.910.10">
    <property type="entry name" value="30s ribosomal protein s13, domain 2"/>
    <property type="match status" value="1"/>
</dbReference>
<dbReference type="HAMAP" id="MF_01315">
    <property type="entry name" value="Ribosomal_uS13"/>
    <property type="match status" value="1"/>
</dbReference>
<dbReference type="InterPro" id="IPR027437">
    <property type="entry name" value="Rbsml_uS13_C"/>
</dbReference>
<dbReference type="InterPro" id="IPR001892">
    <property type="entry name" value="Ribosomal_uS13"/>
</dbReference>
<dbReference type="InterPro" id="IPR010979">
    <property type="entry name" value="Ribosomal_uS13-like_H2TH"/>
</dbReference>
<dbReference type="InterPro" id="IPR018269">
    <property type="entry name" value="Ribosomal_uS13_CS"/>
</dbReference>
<dbReference type="PANTHER" id="PTHR10871">
    <property type="entry name" value="30S RIBOSOMAL PROTEIN S13/40S RIBOSOMAL PROTEIN S18"/>
    <property type="match status" value="1"/>
</dbReference>
<dbReference type="PANTHER" id="PTHR10871:SF8">
    <property type="entry name" value="SMALL RIBOSOMAL SUBUNIT PROTEIN US13M"/>
    <property type="match status" value="1"/>
</dbReference>
<dbReference type="Pfam" id="PF00416">
    <property type="entry name" value="Ribosomal_S13"/>
    <property type="match status" value="1"/>
</dbReference>
<dbReference type="PIRSF" id="PIRSF002134">
    <property type="entry name" value="Ribosomal_S13"/>
    <property type="match status" value="1"/>
</dbReference>
<dbReference type="SUPFAM" id="SSF46946">
    <property type="entry name" value="S13-like H2TH domain"/>
    <property type="match status" value="1"/>
</dbReference>
<dbReference type="PROSITE" id="PS00646">
    <property type="entry name" value="RIBOSOMAL_S13_1"/>
    <property type="match status" value="1"/>
</dbReference>
<dbReference type="PROSITE" id="PS50159">
    <property type="entry name" value="RIBOSOMAL_S13_2"/>
    <property type="match status" value="1"/>
</dbReference>
<evidence type="ECO:0000250" key="1"/>
<evidence type="ECO:0000256" key="2">
    <source>
        <dbReference type="SAM" id="MobiDB-lite"/>
    </source>
</evidence>
<evidence type="ECO:0000305" key="3"/>